<gene>
    <name evidence="1" type="primary">lepA</name>
    <name type="ordered locus">HD_1608</name>
</gene>
<sequence length="597" mass="66278">MQNIRNFSIIAHIDHGKSTLSDRLIQTCGGLSDREMEAQVLDSMDLERERGITIKAQSVTLHYKAKDGETYQLNFIDTPGHVDFSYEVSRSLAACEGALLVVDAGQGVEAQTLANCYTAIEMDLEVVPVLNKIDLPAAEPERVAEEIEDIVGIDAIDAVHCSAKTGFGIENVLEDIVKKIPAPEGDPEAPLQALIIDSWFDNYLGVVSLVRVKNGSIKKGDKIKVMTTGQSYNVDRLGIFTPKQVDTTELKTGEVGWVVCAIKDILGAPVGDTLTHQHHSATEVLPGFKKVKPQVYAGLFPISSDDYEAFRDALGKLSLNDASLFYEPENSTALGFGFRCGFLGLLHMEIIQERLEREYDLDLITTAPTVVYEVLQTNGETIYVDSPSKLPPISNIDEIREPIAECNMLVPQEYLGNIITLCVEKRGIQTNMVYHGNQIALTYEIPMGEVVLDFFDRLKSTSRGYASLDYSFKRFQTADMVRVDIMINSERVDALALIVHKDNAAYRGRELVEKMKELIPRQQFDIAIQAAIGNHIIARSTVKQLRKNVLAKCYGGDVSRKKKLLQKQKEGKKRMKSLGNVEVPQEAFLAILHVGKD</sequence>
<proteinExistence type="inferred from homology"/>
<reference key="1">
    <citation type="submission" date="2003-06" db="EMBL/GenBank/DDBJ databases">
        <title>The complete genome sequence of Haemophilus ducreyi.</title>
        <authorList>
            <person name="Munson R.S. Jr."/>
            <person name="Ray W.C."/>
            <person name="Mahairas G."/>
            <person name="Sabo P."/>
            <person name="Mungur R."/>
            <person name="Johnson L."/>
            <person name="Nguyen D."/>
            <person name="Wang J."/>
            <person name="Forst C."/>
            <person name="Hood L."/>
        </authorList>
    </citation>
    <scope>NUCLEOTIDE SEQUENCE [LARGE SCALE GENOMIC DNA]</scope>
    <source>
        <strain>35000HP / ATCC 700724</strain>
    </source>
</reference>
<accession>Q7VL73</accession>
<feature type="chain" id="PRO_0000176279" description="Elongation factor 4">
    <location>
        <begin position="1"/>
        <end position="597"/>
    </location>
</feature>
<feature type="domain" description="tr-type G">
    <location>
        <begin position="2"/>
        <end position="184"/>
    </location>
</feature>
<feature type="binding site" evidence="1">
    <location>
        <begin position="14"/>
        <end position="19"/>
    </location>
    <ligand>
        <name>GTP</name>
        <dbReference type="ChEBI" id="CHEBI:37565"/>
    </ligand>
</feature>
<feature type="binding site" evidence="1">
    <location>
        <begin position="131"/>
        <end position="134"/>
    </location>
    <ligand>
        <name>GTP</name>
        <dbReference type="ChEBI" id="CHEBI:37565"/>
    </ligand>
</feature>
<name>LEPA_HAEDU</name>
<organism>
    <name type="scientific">Haemophilus ducreyi (strain 35000HP / ATCC 700724)</name>
    <dbReference type="NCBI Taxonomy" id="233412"/>
    <lineage>
        <taxon>Bacteria</taxon>
        <taxon>Pseudomonadati</taxon>
        <taxon>Pseudomonadota</taxon>
        <taxon>Gammaproteobacteria</taxon>
        <taxon>Pasteurellales</taxon>
        <taxon>Pasteurellaceae</taxon>
        <taxon>Haemophilus</taxon>
    </lineage>
</organism>
<protein>
    <recommendedName>
        <fullName evidence="1">Elongation factor 4</fullName>
        <shortName evidence="1">EF-4</shortName>
        <ecNumber evidence="1">3.6.5.n1</ecNumber>
    </recommendedName>
    <alternativeName>
        <fullName evidence="1">Ribosomal back-translocase LepA</fullName>
    </alternativeName>
</protein>
<keyword id="KW-0997">Cell inner membrane</keyword>
<keyword id="KW-1003">Cell membrane</keyword>
<keyword id="KW-0342">GTP-binding</keyword>
<keyword id="KW-0378">Hydrolase</keyword>
<keyword id="KW-0472">Membrane</keyword>
<keyword id="KW-0547">Nucleotide-binding</keyword>
<keyword id="KW-0648">Protein biosynthesis</keyword>
<keyword id="KW-1185">Reference proteome</keyword>
<evidence type="ECO:0000255" key="1">
    <source>
        <dbReference type="HAMAP-Rule" id="MF_00071"/>
    </source>
</evidence>
<evidence type="ECO:0000305" key="2"/>
<dbReference type="EC" id="3.6.5.n1" evidence="1"/>
<dbReference type="EMBL" id="AE017143">
    <property type="protein sequence ID" value="AAP96386.1"/>
    <property type="status" value="ALT_INIT"/>
    <property type="molecule type" value="Genomic_DNA"/>
</dbReference>
<dbReference type="RefSeq" id="WP_041603716.1">
    <property type="nucleotide sequence ID" value="NC_002940.2"/>
</dbReference>
<dbReference type="SMR" id="Q7VL73"/>
<dbReference type="STRING" id="233412.HD_1608"/>
<dbReference type="KEGG" id="hdu:HD_1608"/>
<dbReference type="eggNOG" id="COG0481">
    <property type="taxonomic scope" value="Bacteria"/>
</dbReference>
<dbReference type="HOGENOM" id="CLU_009995_3_3_6"/>
<dbReference type="OrthoDB" id="9804431at2"/>
<dbReference type="Proteomes" id="UP000001022">
    <property type="component" value="Chromosome"/>
</dbReference>
<dbReference type="GO" id="GO:0005886">
    <property type="term" value="C:plasma membrane"/>
    <property type="evidence" value="ECO:0007669"/>
    <property type="project" value="UniProtKB-SubCell"/>
</dbReference>
<dbReference type="GO" id="GO:0005525">
    <property type="term" value="F:GTP binding"/>
    <property type="evidence" value="ECO:0007669"/>
    <property type="project" value="UniProtKB-UniRule"/>
</dbReference>
<dbReference type="GO" id="GO:0003924">
    <property type="term" value="F:GTPase activity"/>
    <property type="evidence" value="ECO:0007669"/>
    <property type="project" value="UniProtKB-UniRule"/>
</dbReference>
<dbReference type="GO" id="GO:0097216">
    <property type="term" value="F:guanosine tetraphosphate binding"/>
    <property type="evidence" value="ECO:0007669"/>
    <property type="project" value="UniProtKB-ARBA"/>
</dbReference>
<dbReference type="GO" id="GO:0043022">
    <property type="term" value="F:ribosome binding"/>
    <property type="evidence" value="ECO:0007669"/>
    <property type="project" value="UniProtKB-UniRule"/>
</dbReference>
<dbReference type="GO" id="GO:0003746">
    <property type="term" value="F:translation elongation factor activity"/>
    <property type="evidence" value="ECO:0007669"/>
    <property type="project" value="UniProtKB-UniRule"/>
</dbReference>
<dbReference type="GO" id="GO:0045727">
    <property type="term" value="P:positive regulation of translation"/>
    <property type="evidence" value="ECO:0007669"/>
    <property type="project" value="UniProtKB-UniRule"/>
</dbReference>
<dbReference type="CDD" id="cd03699">
    <property type="entry name" value="EF4_II"/>
    <property type="match status" value="1"/>
</dbReference>
<dbReference type="CDD" id="cd16260">
    <property type="entry name" value="EF4_III"/>
    <property type="match status" value="1"/>
</dbReference>
<dbReference type="CDD" id="cd01890">
    <property type="entry name" value="LepA"/>
    <property type="match status" value="1"/>
</dbReference>
<dbReference type="CDD" id="cd03709">
    <property type="entry name" value="lepA_C"/>
    <property type="match status" value="1"/>
</dbReference>
<dbReference type="FunFam" id="3.30.70.240:FF:000005">
    <property type="entry name" value="Elongation factor 4"/>
    <property type="match status" value="1"/>
</dbReference>
<dbReference type="FunFam" id="3.40.50.300:FF:000078">
    <property type="entry name" value="Elongation factor 4"/>
    <property type="match status" value="1"/>
</dbReference>
<dbReference type="FunFam" id="2.40.30.10:FF:000015">
    <property type="entry name" value="Translation factor GUF1, mitochondrial"/>
    <property type="match status" value="1"/>
</dbReference>
<dbReference type="FunFam" id="3.30.70.2570:FF:000001">
    <property type="entry name" value="Translation factor GUF1, mitochondrial"/>
    <property type="match status" value="1"/>
</dbReference>
<dbReference type="FunFam" id="3.30.70.870:FF:000004">
    <property type="entry name" value="Translation factor GUF1, mitochondrial"/>
    <property type="match status" value="1"/>
</dbReference>
<dbReference type="Gene3D" id="3.30.70.240">
    <property type="match status" value="1"/>
</dbReference>
<dbReference type="Gene3D" id="3.30.70.2570">
    <property type="entry name" value="Elongation factor 4, C-terminal domain"/>
    <property type="match status" value="1"/>
</dbReference>
<dbReference type="Gene3D" id="3.30.70.870">
    <property type="entry name" value="Elongation Factor G (Translational Gtpase), domain 3"/>
    <property type="match status" value="1"/>
</dbReference>
<dbReference type="Gene3D" id="3.40.50.300">
    <property type="entry name" value="P-loop containing nucleotide triphosphate hydrolases"/>
    <property type="match status" value="1"/>
</dbReference>
<dbReference type="Gene3D" id="2.40.30.10">
    <property type="entry name" value="Translation factors"/>
    <property type="match status" value="1"/>
</dbReference>
<dbReference type="HAMAP" id="MF_00071">
    <property type="entry name" value="LepA"/>
    <property type="match status" value="1"/>
</dbReference>
<dbReference type="InterPro" id="IPR006297">
    <property type="entry name" value="EF-4"/>
</dbReference>
<dbReference type="InterPro" id="IPR035647">
    <property type="entry name" value="EFG_III/V"/>
</dbReference>
<dbReference type="InterPro" id="IPR000640">
    <property type="entry name" value="EFG_V-like"/>
</dbReference>
<dbReference type="InterPro" id="IPR004161">
    <property type="entry name" value="EFTu-like_2"/>
</dbReference>
<dbReference type="InterPro" id="IPR031157">
    <property type="entry name" value="G_TR_CS"/>
</dbReference>
<dbReference type="InterPro" id="IPR038363">
    <property type="entry name" value="LepA_C_sf"/>
</dbReference>
<dbReference type="InterPro" id="IPR013842">
    <property type="entry name" value="LepA_CTD"/>
</dbReference>
<dbReference type="InterPro" id="IPR035654">
    <property type="entry name" value="LepA_IV"/>
</dbReference>
<dbReference type="InterPro" id="IPR027417">
    <property type="entry name" value="P-loop_NTPase"/>
</dbReference>
<dbReference type="InterPro" id="IPR005225">
    <property type="entry name" value="Small_GTP-bd"/>
</dbReference>
<dbReference type="InterPro" id="IPR000795">
    <property type="entry name" value="T_Tr_GTP-bd_dom"/>
</dbReference>
<dbReference type="NCBIfam" id="TIGR01393">
    <property type="entry name" value="lepA"/>
    <property type="match status" value="1"/>
</dbReference>
<dbReference type="NCBIfam" id="TIGR00231">
    <property type="entry name" value="small_GTP"/>
    <property type="match status" value="1"/>
</dbReference>
<dbReference type="PANTHER" id="PTHR43512:SF4">
    <property type="entry name" value="TRANSLATION FACTOR GUF1 HOMOLOG, CHLOROPLASTIC"/>
    <property type="match status" value="1"/>
</dbReference>
<dbReference type="PANTHER" id="PTHR43512">
    <property type="entry name" value="TRANSLATION FACTOR GUF1-RELATED"/>
    <property type="match status" value="1"/>
</dbReference>
<dbReference type="Pfam" id="PF00679">
    <property type="entry name" value="EFG_C"/>
    <property type="match status" value="1"/>
</dbReference>
<dbReference type="Pfam" id="PF00009">
    <property type="entry name" value="GTP_EFTU"/>
    <property type="match status" value="1"/>
</dbReference>
<dbReference type="Pfam" id="PF03144">
    <property type="entry name" value="GTP_EFTU_D2"/>
    <property type="match status" value="1"/>
</dbReference>
<dbReference type="Pfam" id="PF06421">
    <property type="entry name" value="LepA_C"/>
    <property type="match status" value="1"/>
</dbReference>
<dbReference type="PRINTS" id="PR00315">
    <property type="entry name" value="ELONGATNFCT"/>
</dbReference>
<dbReference type="SUPFAM" id="SSF54980">
    <property type="entry name" value="EF-G C-terminal domain-like"/>
    <property type="match status" value="2"/>
</dbReference>
<dbReference type="SUPFAM" id="SSF52540">
    <property type="entry name" value="P-loop containing nucleoside triphosphate hydrolases"/>
    <property type="match status" value="1"/>
</dbReference>
<dbReference type="PROSITE" id="PS00301">
    <property type="entry name" value="G_TR_1"/>
    <property type="match status" value="1"/>
</dbReference>
<dbReference type="PROSITE" id="PS51722">
    <property type="entry name" value="G_TR_2"/>
    <property type="match status" value="1"/>
</dbReference>
<comment type="function">
    <text evidence="1">Required for accurate and efficient protein synthesis under certain stress conditions. May act as a fidelity factor of the translation reaction, by catalyzing a one-codon backward translocation of tRNAs on improperly translocated ribosomes. Back-translocation proceeds from a post-translocation (POST) complex to a pre-translocation (PRE) complex, thus giving elongation factor G a second chance to translocate the tRNAs correctly. Binds to ribosomes in a GTP-dependent manner.</text>
</comment>
<comment type="catalytic activity">
    <reaction evidence="1">
        <text>GTP + H2O = GDP + phosphate + H(+)</text>
        <dbReference type="Rhea" id="RHEA:19669"/>
        <dbReference type="ChEBI" id="CHEBI:15377"/>
        <dbReference type="ChEBI" id="CHEBI:15378"/>
        <dbReference type="ChEBI" id="CHEBI:37565"/>
        <dbReference type="ChEBI" id="CHEBI:43474"/>
        <dbReference type="ChEBI" id="CHEBI:58189"/>
        <dbReference type="EC" id="3.6.5.n1"/>
    </reaction>
</comment>
<comment type="subcellular location">
    <subcellularLocation>
        <location evidence="1">Cell inner membrane</location>
        <topology evidence="1">Peripheral membrane protein</topology>
        <orientation evidence="1">Cytoplasmic side</orientation>
    </subcellularLocation>
</comment>
<comment type="similarity">
    <text evidence="1">Belongs to the TRAFAC class translation factor GTPase superfamily. Classic translation factor GTPase family. LepA subfamily.</text>
</comment>
<comment type="sequence caution" evidence="2">
    <conflict type="erroneous initiation">
        <sequence resource="EMBL-CDS" id="AAP96386"/>
    </conflict>
</comment>